<name>CHLL_CYCTA</name>
<dbReference type="EC" id="1.3.7.7" evidence="1"/>
<dbReference type="EMBL" id="AP009339">
    <property type="protein sequence ID" value="BAF65018.1"/>
    <property type="molecule type" value="Genomic_DNA"/>
</dbReference>
<dbReference type="RefSeq" id="YP_001312276.1">
    <property type="nucleotide sequence ID" value="NC_009618.1"/>
</dbReference>
<dbReference type="SMR" id="A6H5Q2"/>
<dbReference type="GeneID" id="5309488"/>
<dbReference type="UniPathway" id="UPA00670"/>
<dbReference type="GO" id="GO:0009507">
    <property type="term" value="C:chloroplast"/>
    <property type="evidence" value="ECO:0007669"/>
    <property type="project" value="UniProtKB-SubCell"/>
</dbReference>
<dbReference type="GO" id="GO:0051539">
    <property type="term" value="F:4 iron, 4 sulfur cluster binding"/>
    <property type="evidence" value="ECO:0007669"/>
    <property type="project" value="UniProtKB-UniRule"/>
</dbReference>
<dbReference type="GO" id="GO:0005524">
    <property type="term" value="F:ATP binding"/>
    <property type="evidence" value="ECO:0007669"/>
    <property type="project" value="UniProtKB-UniRule"/>
</dbReference>
<dbReference type="GO" id="GO:0046872">
    <property type="term" value="F:metal ion binding"/>
    <property type="evidence" value="ECO:0007669"/>
    <property type="project" value="UniProtKB-KW"/>
</dbReference>
<dbReference type="GO" id="GO:0016730">
    <property type="term" value="F:oxidoreductase activity, acting on iron-sulfur proteins as donors"/>
    <property type="evidence" value="ECO:0007669"/>
    <property type="project" value="InterPro"/>
</dbReference>
<dbReference type="GO" id="GO:0016636">
    <property type="term" value="F:oxidoreductase activity, acting on the CH-CH group of donors, iron-sulfur protein as acceptor"/>
    <property type="evidence" value="ECO:0007669"/>
    <property type="project" value="UniProtKB-UniRule"/>
</dbReference>
<dbReference type="GO" id="GO:0036068">
    <property type="term" value="P:light-independent chlorophyll biosynthetic process"/>
    <property type="evidence" value="ECO:0007669"/>
    <property type="project" value="UniProtKB-UniRule"/>
</dbReference>
<dbReference type="GO" id="GO:0019685">
    <property type="term" value="P:photosynthesis, dark reaction"/>
    <property type="evidence" value="ECO:0007669"/>
    <property type="project" value="InterPro"/>
</dbReference>
<dbReference type="CDD" id="cd02032">
    <property type="entry name" value="Bchl-like"/>
    <property type="match status" value="1"/>
</dbReference>
<dbReference type="Gene3D" id="3.40.50.300">
    <property type="entry name" value="P-loop containing nucleotide triphosphate hydrolases"/>
    <property type="match status" value="1"/>
</dbReference>
<dbReference type="HAMAP" id="MF_00355">
    <property type="entry name" value="ChlL_BchL"/>
    <property type="match status" value="1"/>
</dbReference>
<dbReference type="InterPro" id="IPR030655">
    <property type="entry name" value="NifH/chlL_CS"/>
</dbReference>
<dbReference type="InterPro" id="IPR000392">
    <property type="entry name" value="NifH/frxC"/>
</dbReference>
<dbReference type="InterPro" id="IPR027417">
    <property type="entry name" value="P-loop_NTPase"/>
</dbReference>
<dbReference type="InterPro" id="IPR005971">
    <property type="entry name" value="Protochlorophyllide_ATP-bd"/>
</dbReference>
<dbReference type="NCBIfam" id="TIGR01281">
    <property type="entry name" value="DPOR_bchL"/>
    <property type="match status" value="1"/>
</dbReference>
<dbReference type="PANTHER" id="PTHR42864">
    <property type="entry name" value="LIGHT-INDEPENDENT PROTOCHLOROPHYLLIDE REDUCTASE IRON-SULFUR ATP-BINDING PROTEIN"/>
    <property type="match status" value="1"/>
</dbReference>
<dbReference type="PANTHER" id="PTHR42864:SF2">
    <property type="entry name" value="LIGHT-INDEPENDENT PROTOCHLOROPHYLLIDE REDUCTASE IRON-SULFUR ATP-BINDING PROTEIN"/>
    <property type="match status" value="1"/>
</dbReference>
<dbReference type="Pfam" id="PF00142">
    <property type="entry name" value="Fer4_NifH"/>
    <property type="match status" value="1"/>
</dbReference>
<dbReference type="PIRSF" id="PIRSF000363">
    <property type="entry name" value="Nitrogenase_iron"/>
    <property type="match status" value="1"/>
</dbReference>
<dbReference type="PRINTS" id="PR00091">
    <property type="entry name" value="NITROGNASEII"/>
</dbReference>
<dbReference type="SUPFAM" id="SSF52540">
    <property type="entry name" value="P-loop containing nucleoside triphosphate hydrolases"/>
    <property type="match status" value="1"/>
</dbReference>
<dbReference type="PROSITE" id="PS00746">
    <property type="entry name" value="NIFH_FRXC_1"/>
    <property type="match status" value="1"/>
</dbReference>
<dbReference type="PROSITE" id="PS51026">
    <property type="entry name" value="NIFH_FRXC_3"/>
    <property type="match status" value="1"/>
</dbReference>
<protein>
    <recommendedName>
        <fullName evidence="1">Light-independent protochlorophyllide reductase iron-sulfur ATP-binding protein</fullName>
        <shortName evidence="1">DPOR subunit L</shortName>
        <shortName evidence="1">LI-POR subunit L</shortName>
        <ecNumber evidence="1">1.3.7.7</ecNumber>
    </recommendedName>
</protein>
<accession>A6H5Q2</accession>
<gene>
    <name evidence="1" type="primary">chlL</name>
</gene>
<evidence type="ECO:0000255" key="1">
    <source>
        <dbReference type="HAMAP-Rule" id="MF_00355"/>
    </source>
</evidence>
<keyword id="KW-0004">4Fe-4S</keyword>
<keyword id="KW-0067">ATP-binding</keyword>
<keyword id="KW-0149">Chlorophyll biosynthesis</keyword>
<keyword id="KW-0150">Chloroplast</keyword>
<keyword id="KW-0408">Iron</keyword>
<keyword id="KW-0411">Iron-sulfur</keyword>
<keyword id="KW-0460">Magnesium</keyword>
<keyword id="KW-0479">Metal-binding</keyword>
<keyword id="KW-0547">Nucleotide-binding</keyword>
<keyword id="KW-0560">Oxidoreductase</keyword>
<keyword id="KW-0602">Photosynthesis</keyword>
<keyword id="KW-0934">Plastid</keyword>
<reference key="1">
    <citation type="journal article" date="2007" name="Mol. Biol. Evol.">
        <title>Chloroplast genome (cpDNA) of Cycas taitungensis and 56 cp protein-coding genes of Gnetum parvifolium: insights into cpDNA evolution and phylogeny of extant seed plants.</title>
        <authorList>
            <person name="Wu C.-S."/>
            <person name="Wang Y.-N."/>
            <person name="Liu S.-M."/>
            <person name="Chaw S.-M."/>
        </authorList>
    </citation>
    <scope>NUCLEOTIDE SEQUENCE [LARGE SCALE GENOMIC DNA]</scope>
</reference>
<sequence length="290" mass="31553">MKIAVYGKGGIGKSTTSCNISIALARRGGKVLQIGCDPKHDSTFTLTGFLIPTIIDTLQSKDYHYEEIWPEDVIHKGYGGVDCVEAGGPPAGAGCGGYVVGETVKLLKELNAFYEYDIILFDVLGDVVCGGLAAPLNYADYCVIITDNGFDALFAANRIAVSIGEKTRTHLLRLAGLVGNRTSKRDLIDGYVEVCPMPVIEVLPLIEDIRISRVKGKTLFEMVGSEPSLNYVCEYYLNIADQILSQPEGIVPKEIPDRKFFSLLSDSYLSPINDGKQGKNQENLLGFTMV</sequence>
<comment type="function">
    <text evidence="1">Component of the dark-operative protochlorophyllide reductase (DPOR) that uses Mg-ATP and reduced ferredoxin to reduce ring D of protochlorophyllide (Pchlide) to form chlorophyllide a (Chlide). This reaction is light-independent. The L component serves as a unique electron donor to the NB-component of the complex, and binds Mg-ATP.</text>
</comment>
<comment type="catalytic activity">
    <reaction evidence="1">
        <text>chlorophyllide a + oxidized 2[4Fe-4S]-[ferredoxin] + 2 ADP + 2 phosphate = protochlorophyllide a + reduced 2[4Fe-4S]-[ferredoxin] + 2 ATP + 2 H2O</text>
        <dbReference type="Rhea" id="RHEA:28202"/>
        <dbReference type="Rhea" id="RHEA-COMP:10002"/>
        <dbReference type="Rhea" id="RHEA-COMP:10004"/>
        <dbReference type="ChEBI" id="CHEBI:15377"/>
        <dbReference type="ChEBI" id="CHEBI:30616"/>
        <dbReference type="ChEBI" id="CHEBI:33722"/>
        <dbReference type="ChEBI" id="CHEBI:33723"/>
        <dbReference type="ChEBI" id="CHEBI:43474"/>
        <dbReference type="ChEBI" id="CHEBI:83348"/>
        <dbReference type="ChEBI" id="CHEBI:83350"/>
        <dbReference type="ChEBI" id="CHEBI:456216"/>
        <dbReference type="EC" id="1.3.7.7"/>
    </reaction>
</comment>
<comment type="cofactor">
    <cofactor evidence="1">
        <name>[4Fe-4S] cluster</name>
        <dbReference type="ChEBI" id="CHEBI:49883"/>
    </cofactor>
    <text evidence="1">Binds 1 [4Fe-4S] cluster per dimer.</text>
</comment>
<comment type="pathway">
    <text evidence="1">Porphyrin-containing compound metabolism; chlorophyll biosynthesis (light-independent).</text>
</comment>
<comment type="subunit">
    <text evidence="1">Homodimer. Protochlorophyllide reductase is composed of three subunits; ChlL, ChlN and ChlB.</text>
</comment>
<comment type="subcellular location">
    <subcellularLocation>
        <location>Plastid</location>
        <location>Chloroplast</location>
    </subcellularLocation>
</comment>
<comment type="similarity">
    <text evidence="1">Belongs to the NifH/BchL/ChlL family.</text>
</comment>
<geneLocation type="chloroplast"/>
<proteinExistence type="inferred from homology"/>
<organism>
    <name type="scientific">Cycas taitungensis</name>
    <name type="common">Prince sago</name>
    <name type="synonym">Cycas taiwaniana</name>
    <dbReference type="NCBI Taxonomy" id="54799"/>
    <lineage>
        <taxon>Eukaryota</taxon>
        <taxon>Viridiplantae</taxon>
        <taxon>Streptophyta</taxon>
        <taxon>Embryophyta</taxon>
        <taxon>Tracheophyta</taxon>
        <taxon>Spermatophyta</taxon>
        <taxon>Cycadidae</taxon>
        <taxon>Cycadales</taxon>
        <taxon>Cycadaceae</taxon>
        <taxon>Cycas</taxon>
    </lineage>
</organism>
<feature type="chain" id="PRO_0000324085" description="Light-independent protochlorophyllide reductase iron-sulfur ATP-binding protein">
    <location>
        <begin position="1"/>
        <end position="290"/>
    </location>
</feature>
<feature type="binding site" evidence="1">
    <location>
        <begin position="10"/>
        <end position="15"/>
    </location>
    <ligand>
        <name>ATP</name>
        <dbReference type="ChEBI" id="CHEBI:30616"/>
    </ligand>
</feature>
<feature type="binding site" evidence="1">
    <location>
        <position position="14"/>
    </location>
    <ligand>
        <name>Mg(2+)</name>
        <dbReference type="ChEBI" id="CHEBI:18420"/>
    </ligand>
</feature>
<feature type="binding site" evidence="1">
    <location>
        <position position="39"/>
    </location>
    <ligand>
        <name>ATP</name>
        <dbReference type="ChEBI" id="CHEBI:30616"/>
    </ligand>
</feature>
<feature type="binding site" evidence="1">
    <location>
        <position position="95"/>
    </location>
    <ligand>
        <name>[4Fe-4S] cluster</name>
        <dbReference type="ChEBI" id="CHEBI:49883"/>
        <note>ligand shared between dimeric partners</note>
    </ligand>
</feature>
<feature type="binding site" evidence="1">
    <location>
        <position position="129"/>
    </location>
    <ligand>
        <name>[4Fe-4S] cluster</name>
        <dbReference type="ChEBI" id="CHEBI:49883"/>
        <note>ligand shared between dimeric partners</note>
    </ligand>
</feature>
<feature type="binding site" evidence="1">
    <location>
        <begin position="180"/>
        <end position="181"/>
    </location>
    <ligand>
        <name>ATP</name>
        <dbReference type="ChEBI" id="CHEBI:30616"/>
    </ligand>
</feature>